<gene>
    <name type="primary">ctpV</name>
    <name type="ordered locus">Rv0969</name>
    <name type="ORF">MTCY10D7.05c</name>
</gene>
<sequence>MRVCVTGFNVDAVRAVAIEETVSQVTGVHAVHAYPRTASVVIWYSPELGDTAAVLSAITKAQHVPAELVPARAPHSAGVRGVGVVRKITGGIRRMLSRPPGVDKPLKASRCGGRPRGPVRGSASWPGEQNRRERRTWLPRVWLALPLGLLALGSSMFFGAYPWAGWLAFAATLPVQFVAGWPILRGAVQQARALTSNMDTLIALGTLTAFVYSTYQLFAGGPLFFDTSALIIAFVVLGRHLEARATGKASEAISKLLELGAKEATLLVDGQELLVPVDQVQVGDLVRVRPGEKIPVDGEVTDGRAAVDESMLTGESVPVEKTAGDRVAGATVNLDGLLTVRATAVGADTALAQIVRLVEQAQGDKAPVQRLADRVSAVFVPAVIGVAVATFAGWTLIAANPVAGMTAAVAVLIIACPCALGLATPTAIMVGTGRGAELGILVKGGEVLEASKKIDTVVFDKTGTLTRARMRVTDVIAGQRRQPDQVLRLAAAVESGSEHPIGAAIVAAAHERGLAIPAANAFTAVAGHGVRAQVNGGPVVVGRRKLVDEQHLVLPDHLAAAAVEQEERGRTAVFVGQDGQVVGVLAVADTVKDDAADVVGRLHAMGLQVAMITGDNARTAAAIAKQVGIEKVLAEVLPQDKVAEVRRLQDQGRVVAMVGDGVNDAPALVQADLGIAIGTGTDVAIEASDITLMSGRLDGVVRAIELSRQTLRTIYQNLGWAFGYNTAAIPLAALGALNPVVAGAAMGFSSVSVVTNSLRLRRFGRDGRTA</sequence>
<comment type="function">
    <text evidence="7">Necessary for copper homeostasis and likely functions as a copper exporter. Also required for full virulence.</text>
</comment>
<comment type="catalytic activity">
    <reaction>
        <text>Cu(+)(in) + ATP + H2O = Cu(+)(out) + ADP + phosphate + H(+)</text>
        <dbReference type="Rhea" id="RHEA:25792"/>
        <dbReference type="ChEBI" id="CHEBI:15377"/>
        <dbReference type="ChEBI" id="CHEBI:15378"/>
        <dbReference type="ChEBI" id="CHEBI:30616"/>
        <dbReference type="ChEBI" id="CHEBI:43474"/>
        <dbReference type="ChEBI" id="CHEBI:49552"/>
        <dbReference type="ChEBI" id="CHEBI:456216"/>
        <dbReference type="EC" id="7.2.2.8"/>
    </reaction>
</comment>
<comment type="subcellular location">
    <subcellularLocation>
        <location evidence="5">Cell membrane</location>
        <topology evidence="5">Multi-pass membrane protein</topology>
    </subcellularLocation>
</comment>
<comment type="induction">
    <text evidence="6">Induced by copper ions via CsoR.</text>
</comment>
<comment type="disruption phenotype">
    <text evidence="7">Mutants show increased copper sensitivity.</text>
</comment>
<comment type="similarity">
    <text evidence="8">Belongs to the cation transport ATPase (P-type) (TC 3.A.3) family. Type IB subfamily.</text>
</comment>
<dbReference type="EC" id="7.2.2.8"/>
<dbReference type="EMBL" id="AL123456">
    <property type="protein sequence ID" value="CCP43718.1"/>
    <property type="molecule type" value="Genomic_DNA"/>
</dbReference>
<dbReference type="PIR" id="G70718">
    <property type="entry name" value="G70718"/>
</dbReference>
<dbReference type="RefSeq" id="NP_215484.3">
    <property type="nucleotide sequence ID" value="NC_000962.3"/>
</dbReference>
<dbReference type="RefSeq" id="WP_009935691.1">
    <property type="nucleotide sequence ID" value="NZ_NVQJ01000001.1"/>
</dbReference>
<dbReference type="SMR" id="P9WPS3"/>
<dbReference type="FunCoup" id="P9WPS3">
    <property type="interactions" value="352"/>
</dbReference>
<dbReference type="STRING" id="83332.Rv0969"/>
<dbReference type="PaxDb" id="83332-Rv0969"/>
<dbReference type="DNASU" id="885254"/>
<dbReference type="GeneID" id="885254"/>
<dbReference type="KEGG" id="mtu:Rv0969"/>
<dbReference type="KEGG" id="mtv:RVBD_0969"/>
<dbReference type="PATRIC" id="fig|83332.111.peg.1076"/>
<dbReference type="TubercuList" id="Rv0969"/>
<dbReference type="eggNOG" id="COG2217">
    <property type="taxonomic scope" value="Bacteria"/>
</dbReference>
<dbReference type="InParanoid" id="P9WPS3"/>
<dbReference type="OrthoDB" id="7059309at2"/>
<dbReference type="PhylomeDB" id="P9WPS3"/>
<dbReference type="Proteomes" id="UP000001584">
    <property type="component" value="Chromosome"/>
</dbReference>
<dbReference type="GO" id="GO:0016020">
    <property type="term" value="C:membrane"/>
    <property type="evidence" value="ECO:0000318"/>
    <property type="project" value="GO_Central"/>
</dbReference>
<dbReference type="GO" id="GO:0009274">
    <property type="term" value="C:peptidoglycan-based cell wall"/>
    <property type="evidence" value="ECO:0007005"/>
    <property type="project" value="MTBBASE"/>
</dbReference>
<dbReference type="GO" id="GO:0005886">
    <property type="term" value="C:plasma membrane"/>
    <property type="evidence" value="ECO:0007005"/>
    <property type="project" value="MTBBASE"/>
</dbReference>
<dbReference type="GO" id="GO:0005524">
    <property type="term" value="F:ATP binding"/>
    <property type="evidence" value="ECO:0007669"/>
    <property type="project" value="UniProtKB-KW"/>
</dbReference>
<dbReference type="GO" id="GO:0016887">
    <property type="term" value="F:ATP hydrolysis activity"/>
    <property type="evidence" value="ECO:0007669"/>
    <property type="project" value="InterPro"/>
</dbReference>
<dbReference type="GO" id="GO:0005507">
    <property type="term" value="F:copper ion binding"/>
    <property type="evidence" value="ECO:0000318"/>
    <property type="project" value="GO_Central"/>
</dbReference>
<dbReference type="GO" id="GO:0043682">
    <property type="term" value="F:P-type divalent copper transporter activity"/>
    <property type="evidence" value="ECO:0000318"/>
    <property type="project" value="GO_Central"/>
</dbReference>
<dbReference type="GO" id="GO:0140581">
    <property type="term" value="F:P-type monovalent copper transporter activity"/>
    <property type="evidence" value="ECO:0007669"/>
    <property type="project" value="UniProtKB-EC"/>
</dbReference>
<dbReference type="GO" id="GO:0055070">
    <property type="term" value="P:copper ion homeostasis"/>
    <property type="evidence" value="ECO:0000318"/>
    <property type="project" value="GO_Central"/>
</dbReference>
<dbReference type="GO" id="GO:0010273">
    <property type="term" value="P:detoxification of copper ion"/>
    <property type="evidence" value="ECO:0000314"/>
    <property type="project" value="MTBBASE"/>
</dbReference>
<dbReference type="GO" id="GO:0046688">
    <property type="term" value="P:response to copper ion"/>
    <property type="evidence" value="ECO:0000314"/>
    <property type="project" value="MTBBASE"/>
</dbReference>
<dbReference type="CDD" id="cd02094">
    <property type="entry name" value="P-type_ATPase_Cu-like"/>
    <property type="match status" value="1"/>
</dbReference>
<dbReference type="FunFam" id="2.70.150.10:FF:000020">
    <property type="entry name" value="Copper-exporting P-type ATPase A"/>
    <property type="match status" value="1"/>
</dbReference>
<dbReference type="FunFam" id="3.40.50.1000:FF:000144">
    <property type="entry name" value="copper-transporting ATPase 1 isoform X2"/>
    <property type="match status" value="1"/>
</dbReference>
<dbReference type="Gene3D" id="3.40.1110.10">
    <property type="entry name" value="Calcium-transporting ATPase, cytoplasmic domain N"/>
    <property type="match status" value="1"/>
</dbReference>
<dbReference type="Gene3D" id="2.70.150.10">
    <property type="entry name" value="Calcium-transporting ATPase, cytoplasmic transduction domain A"/>
    <property type="match status" value="1"/>
</dbReference>
<dbReference type="Gene3D" id="3.40.50.1000">
    <property type="entry name" value="HAD superfamily/HAD-like"/>
    <property type="match status" value="1"/>
</dbReference>
<dbReference type="InterPro" id="IPR023299">
    <property type="entry name" value="ATPase_P-typ_cyto_dom_N"/>
</dbReference>
<dbReference type="InterPro" id="IPR018303">
    <property type="entry name" value="ATPase_P-typ_P_site"/>
</dbReference>
<dbReference type="InterPro" id="IPR023298">
    <property type="entry name" value="ATPase_P-typ_TM_dom_sf"/>
</dbReference>
<dbReference type="InterPro" id="IPR008250">
    <property type="entry name" value="ATPase_P-typ_transduc_dom_A_sf"/>
</dbReference>
<dbReference type="InterPro" id="IPR036412">
    <property type="entry name" value="HAD-like_sf"/>
</dbReference>
<dbReference type="InterPro" id="IPR023214">
    <property type="entry name" value="HAD_sf"/>
</dbReference>
<dbReference type="InterPro" id="IPR006121">
    <property type="entry name" value="HMA_dom"/>
</dbReference>
<dbReference type="InterPro" id="IPR027256">
    <property type="entry name" value="P-typ_ATPase_IB"/>
</dbReference>
<dbReference type="InterPro" id="IPR001757">
    <property type="entry name" value="P_typ_ATPase"/>
</dbReference>
<dbReference type="InterPro" id="IPR044492">
    <property type="entry name" value="P_typ_ATPase_HD_dom"/>
</dbReference>
<dbReference type="NCBIfam" id="TIGR01511">
    <property type="entry name" value="ATPase-IB1_Cu"/>
    <property type="match status" value="1"/>
</dbReference>
<dbReference type="NCBIfam" id="TIGR01525">
    <property type="entry name" value="ATPase-IB_hvy"/>
    <property type="match status" value="1"/>
</dbReference>
<dbReference type="NCBIfam" id="TIGR01494">
    <property type="entry name" value="ATPase_P-type"/>
    <property type="match status" value="1"/>
</dbReference>
<dbReference type="PANTHER" id="PTHR43520">
    <property type="entry name" value="ATP7, ISOFORM B"/>
    <property type="match status" value="1"/>
</dbReference>
<dbReference type="PANTHER" id="PTHR43520:SF8">
    <property type="entry name" value="P-TYPE CU(+) TRANSPORTER"/>
    <property type="match status" value="1"/>
</dbReference>
<dbReference type="Pfam" id="PF00122">
    <property type="entry name" value="E1-E2_ATPase"/>
    <property type="match status" value="1"/>
</dbReference>
<dbReference type="Pfam" id="PF00702">
    <property type="entry name" value="Hydrolase"/>
    <property type="match status" value="1"/>
</dbReference>
<dbReference type="PRINTS" id="PR00119">
    <property type="entry name" value="CATATPASE"/>
</dbReference>
<dbReference type="PRINTS" id="PR00120">
    <property type="entry name" value="HATPASE"/>
</dbReference>
<dbReference type="SFLD" id="SFLDG00002">
    <property type="entry name" value="C1.7:_P-type_atpase_like"/>
    <property type="match status" value="1"/>
</dbReference>
<dbReference type="SFLD" id="SFLDF00027">
    <property type="entry name" value="p-type_atpase"/>
    <property type="match status" value="1"/>
</dbReference>
<dbReference type="SUPFAM" id="SSF81653">
    <property type="entry name" value="Calcium ATPase, transduction domain A"/>
    <property type="match status" value="1"/>
</dbReference>
<dbReference type="SUPFAM" id="SSF81665">
    <property type="entry name" value="Calcium ATPase, transmembrane domain M"/>
    <property type="match status" value="1"/>
</dbReference>
<dbReference type="SUPFAM" id="SSF56784">
    <property type="entry name" value="HAD-like"/>
    <property type="match status" value="1"/>
</dbReference>
<dbReference type="PROSITE" id="PS00154">
    <property type="entry name" value="ATPASE_E1_E2"/>
    <property type="match status" value="1"/>
</dbReference>
<dbReference type="PROSITE" id="PS50846">
    <property type="entry name" value="HMA_2"/>
    <property type="match status" value="1"/>
</dbReference>
<evidence type="ECO:0000250" key="1"/>
<evidence type="ECO:0000255" key="2"/>
<evidence type="ECO:0000255" key="3">
    <source>
        <dbReference type="PROSITE-ProRule" id="PRU00280"/>
    </source>
</evidence>
<evidence type="ECO:0000256" key="4">
    <source>
        <dbReference type="SAM" id="MobiDB-lite"/>
    </source>
</evidence>
<evidence type="ECO:0000269" key="5">
    <source>
    </source>
</evidence>
<evidence type="ECO:0000269" key="6">
    <source>
    </source>
</evidence>
<evidence type="ECO:0000269" key="7">
    <source>
    </source>
</evidence>
<evidence type="ECO:0000305" key="8"/>
<proteinExistence type="evidence at protein level"/>
<reference key="1">
    <citation type="journal article" date="1998" name="Nature">
        <title>Deciphering the biology of Mycobacterium tuberculosis from the complete genome sequence.</title>
        <authorList>
            <person name="Cole S.T."/>
            <person name="Brosch R."/>
            <person name="Parkhill J."/>
            <person name="Garnier T."/>
            <person name="Churcher C.M."/>
            <person name="Harris D.E."/>
            <person name="Gordon S.V."/>
            <person name="Eiglmeier K."/>
            <person name="Gas S."/>
            <person name="Barry C.E. III"/>
            <person name="Tekaia F."/>
            <person name="Badcock K."/>
            <person name="Basham D."/>
            <person name="Brown D."/>
            <person name="Chillingworth T."/>
            <person name="Connor R."/>
            <person name="Davies R.M."/>
            <person name="Devlin K."/>
            <person name="Feltwell T."/>
            <person name="Gentles S."/>
            <person name="Hamlin N."/>
            <person name="Holroyd S."/>
            <person name="Hornsby T."/>
            <person name="Jagels K."/>
            <person name="Krogh A."/>
            <person name="McLean J."/>
            <person name="Moule S."/>
            <person name="Murphy L.D."/>
            <person name="Oliver S."/>
            <person name="Osborne J."/>
            <person name="Quail M.A."/>
            <person name="Rajandream M.A."/>
            <person name="Rogers J."/>
            <person name="Rutter S."/>
            <person name="Seeger K."/>
            <person name="Skelton S."/>
            <person name="Squares S."/>
            <person name="Squares R."/>
            <person name="Sulston J.E."/>
            <person name="Taylor K."/>
            <person name="Whitehead S."/>
            <person name="Barrell B.G."/>
        </authorList>
    </citation>
    <scope>NUCLEOTIDE SEQUENCE [LARGE SCALE GENOMIC DNA]</scope>
    <source>
        <strain>ATCC 25618 / H37Rv</strain>
    </source>
</reference>
<reference key="2">
    <citation type="journal article" date="2005" name="J. Proteome Res.">
        <title>Identification of Mycobacterium tuberculosis H37Rv integral membrane proteins by one-dimensional gel electrophoresis and liquid chromatography electrospray ionization tandem mass spectrometry.</title>
        <authorList>
            <person name="Xiong Y."/>
            <person name="Chalmers M.J."/>
            <person name="Gao F.P."/>
            <person name="Cross T.A."/>
            <person name="Marshall A.G."/>
        </authorList>
    </citation>
    <scope>SUBCELLULAR LOCATION</scope>
    <source>
        <strain>ATCC 25618 / H37Rv</strain>
    </source>
</reference>
<reference key="3">
    <citation type="journal article" date="2007" name="Nat. Chem. Biol.">
        <title>CsoR is a novel Mycobacterium tuberculosis copper-sensing transcriptional regulator.</title>
        <authorList>
            <person name="Liu T."/>
            <person name="Ramesh A."/>
            <person name="Ma Z."/>
            <person name="Ward S.K."/>
            <person name="Zhang L."/>
            <person name="George G.N."/>
            <person name="Talaat A.M."/>
            <person name="Sacchettini J.C."/>
            <person name="Giedroc D.P."/>
        </authorList>
    </citation>
    <scope>INDUCTION</scope>
    <source>
        <strain>ATCC 25618 / H37Rv</strain>
    </source>
</reference>
<reference key="4">
    <citation type="journal article" date="2010" name="Mol. Microbiol.">
        <title>CtpV: a putative copper exporter required for full virulence of Mycobacterium tuberculosis.</title>
        <authorList>
            <person name="Ward S.K."/>
            <person name="Abomoelak B."/>
            <person name="Hoye E.A."/>
            <person name="Steinberg H."/>
            <person name="Talaat A.M."/>
        </authorList>
    </citation>
    <scope>FUNCTION IN COPPER HOMEOSTASIS AND IN VIRULENCE</scope>
    <scope>DISRUPTION PHENOTYPE</scope>
    <source>
        <strain>ATCC 25618 / H37Rv</strain>
    </source>
</reference>
<reference key="5">
    <citation type="journal article" date="2011" name="Mol. Cell. Proteomics">
        <title>Proteogenomic analysis of Mycobacterium tuberculosis by high resolution mass spectrometry.</title>
        <authorList>
            <person name="Kelkar D.S."/>
            <person name="Kumar D."/>
            <person name="Kumar P."/>
            <person name="Balakrishnan L."/>
            <person name="Muthusamy B."/>
            <person name="Yadav A.K."/>
            <person name="Shrivastava P."/>
            <person name="Marimuthu A."/>
            <person name="Anand S."/>
            <person name="Sundaram H."/>
            <person name="Kingsbury R."/>
            <person name="Harsha H.C."/>
            <person name="Nair B."/>
            <person name="Prasad T.S."/>
            <person name="Chauhan D.S."/>
            <person name="Katoch K."/>
            <person name="Katoch V.M."/>
            <person name="Kumar P."/>
            <person name="Chaerkady R."/>
            <person name="Ramachandran S."/>
            <person name="Dash D."/>
            <person name="Pandey A."/>
        </authorList>
    </citation>
    <scope>IDENTIFICATION BY MASS SPECTROMETRY [LARGE SCALE ANALYSIS]</scope>
    <source>
        <strain>ATCC 25618 / H37Rv</strain>
    </source>
</reference>
<feature type="chain" id="PRO_0000046348" description="Probable copper-exporting P-type ATPase V">
    <location>
        <begin position="1"/>
        <end position="770"/>
    </location>
</feature>
<feature type="transmembrane region" description="Helical" evidence="2">
    <location>
        <begin position="141"/>
        <end position="161"/>
    </location>
</feature>
<feature type="transmembrane region" description="Helical" evidence="2">
    <location>
        <begin position="164"/>
        <end position="184"/>
    </location>
</feature>
<feature type="transmembrane region" description="Helical" evidence="2">
    <location>
        <begin position="193"/>
        <end position="213"/>
    </location>
</feature>
<feature type="transmembrane region" description="Helical" evidence="2">
    <location>
        <begin position="217"/>
        <end position="237"/>
    </location>
</feature>
<feature type="transmembrane region" description="Helical" evidence="2">
    <location>
        <begin position="377"/>
        <end position="397"/>
    </location>
</feature>
<feature type="transmembrane region" description="Helical" evidence="2">
    <location>
        <begin position="402"/>
        <end position="422"/>
    </location>
</feature>
<feature type="transmembrane region" description="Helical" evidence="2">
    <location>
        <begin position="718"/>
        <end position="737"/>
    </location>
</feature>
<feature type="transmembrane region" description="Helical" evidence="2">
    <location>
        <begin position="741"/>
        <end position="760"/>
    </location>
</feature>
<feature type="domain" description="HMA" evidence="3">
    <location>
        <begin position="1"/>
        <end position="66"/>
    </location>
</feature>
<feature type="region of interest" description="Disordered" evidence="4">
    <location>
        <begin position="103"/>
        <end position="130"/>
    </location>
</feature>
<feature type="compositionally biased region" description="Low complexity" evidence="4">
    <location>
        <begin position="110"/>
        <end position="121"/>
    </location>
</feature>
<feature type="active site" description="4-aspartylphosphate intermediate" evidence="1">
    <location>
        <position position="460"/>
    </location>
</feature>
<feature type="binding site" evidence="1">
    <location>
        <position position="660"/>
    </location>
    <ligand>
        <name>Mg(2+)</name>
        <dbReference type="ChEBI" id="CHEBI:18420"/>
    </ligand>
</feature>
<feature type="binding site" evidence="1">
    <location>
        <position position="664"/>
    </location>
    <ligand>
        <name>Mg(2+)</name>
        <dbReference type="ChEBI" id="CHEBI:18420"/>
    </ligand>
</feature>
<organism>
    <name type="scientific">Mycobacterium tuberculosis (strain ATCC 25618 / H37Rv)</name>
    <dbReference type="NCBI Taxonomy" id="83332"/>
    <lineage>
        <taxon>Bacteria</taxon>
        <taxon>Bacillati</taxon>
        <taxon>Actinomycetota</taxon>
        <taxon>Actinomycetes</taxon>
        <taxon>Mycobacteriales</taxon>
        <taxon>Mycobacteriaceae</taxon>
        <taxon>Mycobacterium</taxon>
        <taxon>Mycobacterium tuberculosis complex</taxon>
    </lineage>
</organism>
<protein>
    <recommendedName>
        <fullName>Probable copper-exporting P-type ATPase V</fullName>
        <ecNumber>7.2.2.8</ecNumber>
    </recommendedName>
    <alternativeName>
        <fullName>Cu(+)-exporting ATPase</fullName>
    </alternativeName>
</protein>
<accession>P9WPS3</accession>
<accession>L0T821</accession>
<accession>P77894</accession>
<name>CTPV_MYCTU</name>
<keyword id="KW-0067">ATP-binding</keyword>
<keyword id="KW-1003">Cell membrane</keyword>
<keyword id="KW-0186">Copper</keyword>
<keyword id="KW-0187">Copper transport</keyword>
<keyword id="KW-0406">Ion transport</keyword>
<keyword id="KW-0460">Magnesium</keyword>
<keyword id="KW-0472">Membrane</keyword>
<keyword id="KW-0479">Metal-binding</keyword>
<keyword id="KW-0547">Nucleotide-binding</keyword>
<keyword id="KW-1185">Reference proteome</keyword>
<keyword id="KW-1278">Translocase</keyword>
<keyword id="KW-0812">Transmembrane</keyword>
<keyword id="KW-1133">Transmembrane helix</keyword>
<keyword id="KW-0813">Transport</keyword>